<keyword id="KW-1185">Reference proteome</keyword>
<keyword id="KW-0687">Ribonucleoprotein</keyword>
<keyword id="KW-0689">Ribosomal protein</keyword>
<keyword id="KW-0694">RNA-binding</keyword>
<keyword id="KW-0699">rRNA-binding</keyword>
<accession>P59371</accession>
<reference key="1">
    <citation type="journal article" date="2003" name="Genome Res.">
        <title>Comparative complete genome sequence analysis of the amino acid replacements responsible for the thermostability of Corynebacterium efficiens.</title>
        <authorList>
            <person name="Nishio Y."/>
            <person name="Nakamura Y."/>
            <person name="Kawarabayasi Y."/>
            <person name="Usuda Y."/>
            <person name="Kimura E."/>
            <person name="Sugimoto S."/>
            <person name="Matsui K."/>
            <person name="Yamagishi A."/>
            <person name="Kikuchi H."/>
            <person name="Ikeo K."/>
            <person name="Gojobori T."/>
        </authorList>
    </citation>
    <scope>NUCLEOTIDE SEQUENCE [LARGE SCALE GENOMIC DNA]</scope>
    <source>
        <strain>DSM 44549 / YS-314 / AJ 12310 / JCM 11189 / NBRC 100395</strain>
    </source>
</reference>
<protein>
    <recommendedName>
        <fullName evidence="1">Small ribosomal subunit protein uS11</fullName>
    </recommendedName>
    <alternativeName>
        <fullName evidence="3">30S ribosomal protein S11</fullName>
    </alternativeName>
</protein>
<evidence type="ECO:0000255" key="1">
    <source>
        <dbReference type="HAMAP-Rule" id="MF_01310"/>
    </source>
</evidence>
<evidence type="ECO:0000256" key="2">
    <source>
        <dbReference type="SAM" id="MobiDB-lite"/>
    </source>
</evidence>
<evidence type="ECO:0000305" key="3"/>
<dbReference type="EMBL" id="BA000035">
    <property type="protein sequence ID" value="BAC17380.1"/>
    <property type="molecule type" value="Genomic_DNA"/>
</dbReference>
<dbReference type="RefSeq" id="WP_011075047.1">
    <property type="nucleotide sequence ID" value="NZ_GG700687.1"/>
</dbReference>
<dbReference type="SMR" id="P59371"/>
<dbReference type="STRING" id="196164.gene:10740972"/>
<dbReference type="KEGG" id="cef:CE0570"/>
<dbReference type="eggNOG" id="COG0100">
    <property type="taxonomic scope" value="Bacteria"/>
</dbReference>
<dbReference type="HOGENOM" id="CLU_072439_5_0_11"/>
<dbReference type="OrthoDB" id="9806415at2"/>
<dbReference type="Proteomes" id="UP000001409">
    <property type="component" value="Chromosome"/>
</dbReference>
<dbReference type="GO" id="GO:1990904">
    <property type="term" value="C:ribonucleoprotein complex"/>
    <property type="evidence" value="ECO:0007669"/>
    <property type="project" value="UniProtKB-KW"/>
</dbReference>
<dbReference type="GO" id="GO:0005840">
    <property type="term" value="C:ribosome"/>
    <property type="evidence" value="ECO:0007669"/>
    <property type="project" value="UniProtKB-KW"/>
</dbReference>
<dbReference type="GO" id="GO:0019843">
    <property type="term" value="F:rRNA binding"/>
    <property type="evidence" value="ECO:0007669"/>
    <property type="project" value="UniProtKB-UniRule"/>
</dbReference>
<dbReference type="GO" id="GO:0003735">
    <property type="term" value="F:structural constituent of ribosome"/>
    <property type="evidence" value="ECO:0007669"/>
    <property type="project" value="InterPro"/>
</dbReference>
<dbReference type="GO" id="GO:0006412">
    <property type="term" value="P:translation"/>
    <property type="evidence" value="ECO:0007669"/>
    <property type="project" value="UniProtKB-UniRule"/>
</dbReference>
<dbReference type="FunFam" id="3.30.420.80:FF:000001">
    <property type="entry name" value="30S ribosomal protein S11"/>
    <property type="match status" value="1"/>
</dbReference>
<dbReference type="Gene3D" id="3.30.420.80">
    <property type="entry name" value="Ribosomal protein S11"/>
    <property type="match status" value="1"/>
</dbReference>
<dbReference type="HAMAP" id="MF_01310">
    <property type="entry name" value="Ribosomal_uS11"/>
    <property type="match status" value="1"/>
</dbReference>
<dbReference type="InterPro" id="IPR001971">
    <property type="entry name" value="Ribosomal_uS11"/>
</dbReference>
<dbReference type="InterPro" id="IPR019981">
    <property type="entry name" value="Ribosomal_uS11_bac-type"/>
</dbReference>
<dbReference type="InterPro" id="IPR018102">
    <property type="entry name" value="Ribosomal_uS11_CS"/>
</dbReference>
<dbReference type="InterPro" id="IPR036967">
    <property type="entry name" value="Ribosomal_uS11_sf"/>
</dbReference>
<dbReference type="NCBIfam" id="NF003698">
    <property type="entry name" value="PRK05309.1"/>
    <property type="match status" value="1"/>
</dbReference>
<dbReference type="NCBIfam" id="TIGR03632">
    <property type="entry name" value="uS11_bact"/>
    <property type="match status" value="1"/>
</dbReference>
<dbReference type="PANTHER" id="PTHR11759">
    <property type="entry name" value="40S RIBOSOMAL PROTEIN S14/30S RIBOSOMAL PROTEIN S11"/>
    <property type="match status" value="1"/>
</dbReference>
<dbReference type="Pfam" id="PF00411">
    <property type="entry name" value="Ribosomal_S11"/>
    <property type="match status" value="1"/>
</dbReference>
<dbReference type="PIRSF" id="PIRSF002131">
    <property type="entry name" value="Ribosomal_S11"/>
    <property type="match status" value="1"/>
</dbReference>
<dbReference type="SUPFAM" id="SSF53137">
    <property type="entry name" value="Translational machinery components"/>
    <property type="match status" value="1"/>
</dbReference>
<dbReference type="PROSITE" id="PS00054">
    <property type="entry name" value="RIBOSOMAL_S11"/>
    <property type="match status" value="1"/>
</dbReference>
<organism>
    <name type="scientific">Corynebacterium efficiens (strain DSM 44549 / YS-314 / AJ 12310 / JCM 11189 / NBRC 100395)</name>
    <dbReference type="NCBI Taxonomy" id="196164"/>
    <lineage>
        <taxon>Bacteria</taxon>
        <taxon>Bacillati</taxon>
        <taxon>Actinomycetota</taxon>
        <taxon>Actinomycetes</taxon>
        <taxon>Mycobacteriales</taxon>
        <taxon>Corynebacteriaceae</taxon>
        <taxon>Corynebacterium</taxon>
    </lineage>
</organism>
<comment type="function">
    <text evidence="1">Located on the platform of the 30S subunit, it bridges several disparate RNA helices of the 16S rRNA. Forms part of the Shine-Dalgarno cleft in the 70S ribosome.</text>
</comment>
<comment type="subunit">
    <text evidence="1">Part of the 30S ribosomal subunit. Interacts with proteins S7 and S18. Binds to IF-3.</text>
</comment>
<comment type="similarity">
    <text evidence="1">Belongs to the universal ribosomal protein uS11 family.</text>
</comment>
<feature type="chain" id="PRO_0000123138" description="Small ribosomal subunit protein uS11">
    <location>
        <begin position="1"/>
        <end position="134"/>
    </location>
</feature>
<feature type="region of interest" description="Disordered" evidence="2">
    <location>
        <begin position="114"/>
        <end position="134"/>
    </location>
</feature>
<name>RS11_COREF</name>
<sequence>MPPKARSGARRTGRRVVKKNVAQGHAYIKSTFNNTIVSITDPNGAVISWASSGHVGFKGSRKSTPFAAQMAAENAARKAMDHGMKKVDVFVKGPGSGRETAIRSLQAAGLEVSSISDVTPQPHNGCRPPKRRRV</sequence>
<proteinExistence type="inferred from homology"/>
<gene>
    <name evidence="1" type="primary">rpsK</name>
    <name type="ordered locus">CE0570</name>
</gene>